<dbReference type="EMBL" id="U79745">
    <property type="protein sequence ID" value="AAC52014.1"/>
    <property type="status" value="ALT_FRAME"/>
    <property type="molecule type" value="mRNA"/>
</dbReference>
<dbReference type="EMBL" id="CH471099">
    <property type="protein sequence ID" value="EAW89052.1"/>
    <property type="molecule type" value="Genomic_DNA"/>
</dbReference>
<dbReference type="EMBL" id="BC064832">
    <property type="protein sequence ID" value="AAH64832.1"/>
    <property type="molecule type" value="mRNA"/>
</dbReference>
<dbReference type="CCDS" id="CCDS11675.1"/>
<dbReference type="RefSeq" id="NP_001167637.1">
    <property type="nucleotide sequence ID" value="NM_001174166.2"/>
</dbReference>
<dbReference type="RefSeq" id="NP_004685.2">
    <property type="nucleotide sequence ID" value="NM_004694.4"/>
</dbReference>
<dbReference type="RefSeq" id="XP_011523763.1">
    <property type="nucleotide sequence ID" value="XM_011525461.4"/>
</dbReference>
<dbReference type="RefSeq" id="XP_016880780.1">
    <property type="nucleotide sequence ID" value="XM_017025291.1"/>
</dbReference>
<dbReference type="RefSeq" id="XP_016880781.1">
    <property type="nucleotide sequence ID" value="XM_017025292.3"/>
</dbReference>
<dbReference type="RefSeq" id="XP_047292976.1">
    <property type="nucleotide sequence ID" value="XM_047437020.1"/>
</dbReference>
<dbReference type="SMR" id="O15403"/>
<dbReference type="BioGRID" id="114568">
    <property type="interactions" value="11"/>
</dbReference>
<dbReference type="FunCoup" id="O15403">
    <property type="interactions" value="130"/>
</dbReference>
<dbReference type="IntAct" id="O15403">
    <property type="interactions" value="11"/>
</dbReference>
<dbReference type="STRING" id="9606.ENSP00000319991"/>
<dbReference type="DrugBank" id="DB00119">
    <property type="generic name" value="Pyruvic acid"/>
</dbReference>
<dbReference type="TCDB" id="2.A.1.13.15">
    <property type="family name" value="the major facilitator superfamily (mfs)"/>
</dbReference>
<dbReference type="iPTMnet" id="O15403"/>
<dbReference type="PhosphoSitePlus" id="O15403"/>
<dbReference type="SwissPalm" id="O15403"/>
<dbReference type="BioMuta" id="SLC16A6"/>
<dbReference type="jPOST" id="O15403"/>
<dbReference type="MassIVE" id="O15403"/>
<dbReference type="PaxDb" id="9606-ENSP00000319991"/>
<dbReference type="PeptideAtlas" id="O15403"/>
<dbReference type="ProteomicsDB" id="48641"/>
<dbReference type="Antibodypedia" id="31766">
    <property type="antibodies" value="44 antibodies from 19 providers"/>
</dbReference>
<dbReference type="DNASU" id="9120"/>
<dbReference type="Ensembl" id="ENST00000327268.8">
    <property type="protein sequence ID" value="ENSP00000319991.4"/>
    <property type="gene ID" value="ENSG00000108932.13"/>
</dbReference>
<dbReference type="Ensembl" id="ENST00000580666.6">
    <property type="protein sequence ID" value="ENSP00000462985.1"/>
    <property type="gene ID" value="ENSG00000108932.13"/>
</dbReference>
<dbReference type="GeneID" id="9120"/>
<dbReference type="KEGG" id="hsa:9120"/>
<dbReference type="MANE-Select" id="ENST00000580666.6">
    <property type="protein sequence ID" value="ENSP00000462985.1"/>
    <property type="RefSeq nucleotide sequence ID" value="NM_004694.5"/>
    <property type="RefSeq protein sequence ID" value="NP_004685.2"/>
</dbReference>
<dbReference type="UCSC" id="uc002jgz.3">
    <property type="organism name" value="human"/>
</dbReference>
<dbReference type="AGR" id="HGNC:10927"/>
<dbReference type="CTD" id="9120"/>
<dbReference type="DisGeNET" id="9120"/>
<dbReference type="GeneCards" id="SLC16A6"/>
<dbReference type="HGNC" id="HGNC:10927">
    <property type="gene designation" value="SLC16A6"/>
</dbReference>
<dbReference type="HPA" id="ENSG00000108932">
    <property type="expression patterns" value="Tissue enhanced (choroid plexus, epididymis, retina)"/>
</dbReference>
<dbReference type="MIM" id="603880">
    <property type="type" value="gene"/>
</dbReference>
<dbReference type="neXtProt" id="NX_O15403"/>
<dbReference type="OpenTargets" id="ENSG00000108932"/>
<dbReference type="PharmGKB" id="PA35818"/>
<dbReference type="VEuPathDB" id="HostDB:ENSG00000108932"/>
<dbReference type="eggNOG" id="KOG2504">
    <property type="taxonomic scope" value="Eukaryota"/>
</dbReference>
<dbReference type="GeneTree" id="ENSGT00940000155575"/>
<dbReference type="HOGENOM" id="CLU_001265_59_1_1"/>
<dbReference type="InParanoid" id="O15403"/>
<dbReference type="OMA" id="TFFCGVQ"/>
<dbReference type="OrthoDB" id="8055603at2759"/>
<dbReference type="PAN-GO" id="O15403">
    <property type="GO annotations" value="3 GO annotations based on evolutionary models"/>
</dbReference>
<dbReference type="PhylomeDB" id="O15403"/>
<dbReference type="TreeFam" id="TF313792"/>
<dbReference type="PathwayCommons" id="O15403"/>
<dbReference type="SignaLink" id="O15403"/>
<dbReference type="BioGRID-ORCS" id="9120">
    <property type="hits" value="12 hits in 1153 CRISPR screens"/>
</dbReference>
<dbReference type="ChiTaRS" id="SLC16A6">
    <property type="organism name" value="human"/>
</dbReference>
<dbReference type="GenomeRNAi" id="9120"/>
<dbReference type="Pharos" id="O15403">
    <property type="development level" value="Tdark"/>
</dbReference>
<dbReference type="PRO" id="PR:O15403"/>
<dbReference type="Proteomes" id="UP000005640">
    <property type="component" value="Chromosome 17"/>
</dbReference>
<dbReference type="RNAct" id="O15403">
    <property type="molecule type" value="protein"/>
</dbReference>
<dbReference type="Bgee" id="ENSG00000108932">
    <property type="expression patterns" value="Expressed in corpus epididymis and 166 other cell types or tissues"/>
</dbReference>
<dbReference type="ExpressionAtlas" id="O15403">
    <property type="expression patterns" value="baseline and differential"/>
</dbReference>
<dbReference type="GO" id="GO:0016323">
    <property type="term" value="C:basolateral plasma membrane"/>
    <property type="evidence" value="ECO:0000250"/>
    <property type="project" value="UniProtKB"/>
</dbReference>
<dbReference type="GO" id="GO:0016020">
    <property type="term" value="C:membrane"/>
    <property type="evidence" value="ECO:0000304"/>
    <property type="project" value="ProtInc"/>
</dbReference>
<dbReference type="GO" id="GO:0005886">
    <property type="term" value="C:plasma membrane"/>
    <property type="evidence" value="ECO:0000318"/>
    <property type="project" value="GO_Central"/>
</dbReference>
<dbReference type="GO" id="GO:0008028">
    <property type="term" value="F:monocarboxylic acid transmembrane transporter activity"/>
    <property type="evidence" value="ECO:0000318"/>
    <property type="project" value="GO_Central"/>
</dbReference>
<dbReference type="GO" id="GO:0005368">
    <property type="term" value="F:taurine transmembrane transporter activity"/>
    <property type="evidence" value="ECO:0000250"/>
    <property type="project" value="UniProtKB"/>
</dbReference>
<dbReference type="GO" id="GO:0015718">
    <property type="term" value="P:monocarboxylic acid transport"/>
    <property type="evidence" value="ECO:0000304"/>
    <property type="project" value="ProtInc"/>
</dbReference>
<dbReference type="CDD" id="cd17422">
    <property type="entry name" value="MFS_MCT7"/>
    <property type="match status" value="1"/>
</dbReference>
<dbReference type="FunFam" id="1.20.1250.20:FF:000326">
    <property type="entry name" value="Solute carrier family 16 member 6"/>
    <property type="match status" value="1"/>
</dbReference>
<dbReference type="FunFam" id="1.20.1250.20:FF:000490">
    <property type="entry name" value="Solute carrier family 16 member 6"/>
    <property type="match status" value="1"/>
</dbReference>
<dbReference type="Gene3D" id="1.20.1250.20">
    <property type="entry name" value="MFS general substrate transporter like domains"/>
    <property type="match status" value="1"/>
</dbReference>
<dbReference type="InterPro" id="IPR030766">
    <property type="entry name" value="MCT7"/>
</dbReference>
<dbReference type="InterPro" id="IPR011701">
    <property type="entry name" value="MFS"/>
</dbReference>
<dbReference type="InterPro" id="IPR020846">
    <property type="entry name" value="MFS_dom"/>
</dbReference>
<dbReference type="InterPro" id="IPR036259">
    <property type="entry name" value="MFS_trans_sf"/>
</dbReference>
<dbReference type="InterPro" id="IPR050327">
    <property type="entry name" value="Proton-linked_MCT"/>
</dbReference>
<dbReference type="PANTHER" id="PTHR11360">
    <property type="entry name" value="MONOCARBOXYLATE TRANSPORTER"/>
    <property type="match status" value="1"/>
</dbReference>
<dbReference type="PANTHER" id="PTHR11360:SF20">
    <property type="entry name" value="MONOCARBOXYLATE TRANSPORTER 7"/>
    <property type="match status" value="1"/>
</dbReference>
<dbReference type="Pfam" id="PF07690">
    <property type="entry name" value="MFS_1"/>
    <property type="match status" value="1"/>
</dbReference>
<dbReference type="SUPFAM" id="SSF103473">
    <property type="entry name" value="MFS general substrate transporter"/>
    <property type="match status" value="1"/>
</dbReference>
<dbReference type="PROSITE" id="PS50850">
    <property type="entry name" value="MFS"/>
    <property type="match status" value="1"/>
</dbReference>
<keyword id="KW-1003">Cell membrane</keyword>
<keyword id="KW-0472">Membrane</keyword>
<keyword id="KW-0597">Phosphoprotein</keyword>
<keyword id="KW-1267">Proteomics identification</keyword>
<keyword id="KW-1185">Reference proteome</keyword>
<keyword id="KW-0812">Transmembrane</keyword>
<keyword id="KW-1133">Transmembrane helix</keyword>
<keyword id="KW-0813">Transport</keyword>
<name>MOT7_HUMAN</name>
<gene>
    <name evidence="2 6" type="primary">SLC16A6</name>
    <name type="synonym">MCT6</name>
    <name evidence="2" type="synonym">MCT7</name>
</gene>
<protein>
    <recommendedName>
        <fullName evidence="2">Monocarboxylate transporter 7</fullName>
        <shortName evidence="2">MCT 7</shortName>
    </recommendedName>
    <alternativeName>
        <fullName>Monocarboxylate transporter 6</fullName>
        <shortName>MCT 6</shortName>
    </alternativeName>
    <alternativeName>
        <fullName>Solute carrier family 16 member 6</fullName>
    </alternativeName>
</protein>
<reference key="1">
    <citation type="journal article" date="1998" name="Biochem. J.">
        <title>Cloning and sequencing of four new mammalian monocarboxylate transporter (MCT) homologues confirms the existence of a transporter family with an ancient past.</title>
        <authorList>
            <person name="Price N.T."/>
            <person name="Jackson V.N."/>
            <person name="Halestrap A.P."/>
        </authorList>
    </citation>
    <scope>NUCLEOTIDE SEQUENCE [MRNA]</scope>
    <scope>VARIANT ILE-204</scope>
    <source>
        <tissue>Blood</tissue>
    </source>
</reference>
<reference key="2">
    <citation type="submission" date="2005-07" db="EMBL/GenBank/DDBJ databases">
        <authorList>
            <person name="Mural R.J."/>
            <person name="Istrail S."/>
            <person name="Sutton G.G."/>
            <person name="Florea L."/>
            <person name="Halpern A.L."/>
            <person name="Mobarry C.M."/>
            <person name="Lippert R."/>
            <person name="Walenz B."/>
            <person name="Shatkay H."/>
            <person name="Dew I."/>
            <person name="Miller J.R."/>
            <person name="Flanigan M.J."/>
            <person name="Edwards N.J."/>
            <person name="Bolanos R."/>
            <person name="Fasulo D."/>
            <person name="Halldorsson B.V."/>
            <person name="Hannenhalli S."/>
            <person name="Turner R."/>
            <person name="Yooseph S."/>
            <person name="Lu F."/>
            <person name="Nusskern D.R."/>
            <person name="Shue B.C."/>
            <person name="Zheng X.H."/>
            <person name="Zhong F."/>
            <person name="Delcher A.L."/>
            <person name="Huson D.H."/>
            <person name="Kravitz S.A."/>
            <person name="Mouchard L."/>
            <person name="Reinert K."/>
            <person name="Remington K.A."/>
            <person name="Clark A.G."/>
            <person name="Waterman M.S."/>
            <person name="Eichler E.E."/>
            <person name="Adams M.D."/>
            <person name="Hunkapiller M.W."/>
            <person name="Myers E.W."/>
            <person name="Venter J.C."/>
        </authorList>
    </citation>
    <scope>NUCLEOTIDE SEQUENCE [LARGE SCALE GENOMIC DNA]</scope>
</reference>
<reference key="3">
    <citation type="journal article" date="2004" name="Genome Res.">
        <title>The status, quality, and expansion of the NIH full-length cDNA project: the Mammalian Gene Collection (MGC).</title>
        <authorList>
            <consortium name="The MGC Project Team"/>
        </authorList>
    </citation>
    <scope>NUCLEOTIDE SEQUENCE [LARGE SCALE MRNA]</scope>
</reference>
<reference key="4">
    <citation type="journal article" date="2006" name="Cell">
        <title>Global, in vivo, and site-specific phosphorylation dynamics in signaling networks.</title>
        <authorList>
            <person name="Olsen J.V."/>
            <person name="Blagoev B."/>
            <person name="Gnad F."/>
            <person name="Macek B."/>
            <person name="Kumar C."/>
            <person name="Mortensen P."/>
            <person name="Mann M."/>
        </authorList>
    </citation>
    <scope>PHOSPHORYLATION [LARGE SCALE ANALYSIS] AT SER-237 AND SER-240</scope>
    <scope>IDENTIFICATION BY MASS SPECTROMETRY [LARGE SCALE ANALYSIS]</scope>
    <source>
        <tissue>Cervix carcinoma</tissue>
    </source>
</reference>
<reference key="5">
    <citation type="journal article" date="2008" name="Mol. Cell">
        <title>Kinase-selective enrichment enables quantitative phosphoproteomics of the kinome across the cell cycle.</title>
        <authorList>
            <person name="Daub H."/>
            <person name="Olsen J.V."/>
            <person name="Bairlein M."/>
            <person name="Gnad F."/>
            <person name="Oppermann F.S."/>
            <person name="Korner R."/>
            <person name="Greff Z."/>
            <person name="Keri G."/>
            <person name="Stemmann O."/>
            <person name="Mann M."/>
        </authorList>
    </citation>
    <scope>IDENTIFICATION BY MASS SPECTROMETRY [LARGE SCALE ANALYSIS]</scope>
    <source>
        <tissue>Cervix carcinoma</tissue>
    </source>
</reference>
<reference key="6">
    <citation type="journal article" date="2008" name="Proc. Natl. Acad. Sci. U.S.A.">
        <title>A quantitative atlas of mitotic phosphorylation.</title>
        <authorList>
            <person name="Dephoure N."/>
            <person name="Zhou C."/>
            <person name="Villen J."/>
            <person name="Beausoleil S.A."/>
            <person name="Bakalarski C.E."/>
            <person name="Elledge S.J."/>
            <person name="Gygi S.P."/>
        </authorList>
    </citation>
    <scope>PHOSPHORYLATION [LARGE SCALE ANALYSIS] AT SER-237; SER-240 AND SER-247</scope>
    <scope>IDENTIFICATION BY MASS SPECTROMETRY [LARGE SCALE ANALYSIS]</scope>
    <source>
        <tissue>Cervix carcinoma</tissue>
    </source>
</reference>
<comment type="function">
    <text evidence="2">Monocarboxylate transporter selective for taurine. May associate with BSG/CD147 or EMB/GP70 ancillary proteins to mediate facilitative efflux or influx of taurine across the plasma membrane. The transport is pH- and sodium-independent. Rather low-affinity, is likely effective for taurine transport in tissues where taurine is present at high concentrations.</text>
</comment>
<comment type="catalytic activity">
    <reaction evidence="2">
        <text>taurine(out) = taurine(in)</text>
        <dbReference type="Rhea" id="RHEA:66328"/>
        <dbReference type="ChEBI" id="CHEBI:507393"/>
    </reaction>
    <physiologicalReaction direction="left-to-right" evidence="2">
        <dbReference type="Rhea" id="RHEA:66329"/>
    </physiologicalReaction>
    <physiologicalReaction direction="right-to-left" evidence="2">
        <dbReference type="Rhea" id="RHEA:66330"/>
    </physiologicalReaction>
</comment>
<comment type="subunit">
    <text evidence="2">Forms functional complexes with BSG/CD147 or EMB/GP70 ancillary proteins.</text>
</comment>
<comment type="interaction">
    <interactant intactId="EBI-11041701">
        <id>O15403</id>
    </interactant>
    <interactant intactId="EBI-720609">
        <id>O76024</id>
        <label>WFS1</label>
    </interactant>
    <organismsDiffer>false</organismsDiffer>
    <experiments>3</experiments>
</comment>
<comment type="subcellular location">
    <subcellularLocation>
        <location evidence="2">Basolateral cell membrane</location>
        <topology evidence="3">Multi-pass membrane protein</topology>
    </subcellularLocation>
</comment>
<comment type="similarity">
    <text evidence="5">Belongs to the major facilitator superfamily. Monocarboxylate porter (TC 2.A.1.13) family.</text>
</comment>
<comment type="sequence caution" evidence="5">
    <conflict type="frameshift">
        <sequence resource="EMBL-CDS" id="AAC52014"/>
    </conflict>
</comment>
<proteinExistence type="evidence at protein level"/>
<feature type="chain" id="PRO_0000211400" description="Monocarboxylate transporter 7">
    <location>
        <begin position="1"/>
        <end position="523"/>
    </location>
</feature>
<feature type="topological domain" description="Cytoplasmic" evidence="3">
    <location>
        <begin position="1"/>
        <end position="21"/>
    </location>
</feature>
<feature type="transmembrane region" description="Helical" evidence="3">
    <location>
        <begin position="22"/>
        <end position="42"/>
    </location>
</feature>
<feature type="topological domain" description="Extracellular" evidence="3">
    <location>
        <begin position="43"/>
        <end position="62"/>
    </location>
</feature>
<feature type="transmembrane region" description="Helical" evidence="3">
    <location>
        <begin position="63"/>
        <end position="83"/>
    </location>
</feature>
<feature type="topological domain" description="Cytoplasmic" evidence="3">
    <location>
        <begin position="84"/>
        <end position="91"/>
    </location>
</feature>
<feature type="transmembrane region" description="Helical" evidence="3">
    <location>
        <begin position="92"/>
        <end position="112"/>
    </location>
</feature>
<feature type="topological domain" description="Extracellular" evidence="3">
    <location>
        <begin position="113"/>
        <end position="118"/>
    </location>
</feature>
<feature type="transmembrane region" description="Helical" evidence="3">
    <location>
        <begin position="119"/>
        <end position="139"/>
    </location>
</feature>
<feature type="topological domain" description="Cytoplasmic" evidence="3">
    <location>
        <begin position="140"/>
        <end position="149"/>
    </location>
</feature>
<feature type="transmembrane region" description="Helical" evidence="3">
    <location>
        <begin position="150"/>
        <end position="170"/>
    </location>
</feature>
<feature type="topological domain" description="Extracellular" evidence="3">
    <location>
        <begin position="171"/>
        <end position="184"/>
    </location>
</feature>
<feature type="transmembrane region" description="Helical" evidence="3">
    <location>
        <begin position="185"/>
        <end position="205"/>
    </location>
</feature>
<feature type="topological domain" description="Cytoplasmic" evidence="3">
    <location>
        <begin position="206"/>
        <end position="299"/>
    </location>
</feature>
<feature type="transmembrane region" description="Helical" evidence="3">
    <location>
        <begin position="300"/>
        <end position="320"/>
    </location>
</feature>
<feature type="topological domain" description="Extracellular" evidence="3">
    <location>
        <begin position="321"/>
        <end position="330"/>
    </location>
</feature>
<feature type="transmembrane region" description="Helical" evidence="3">
    <location>
        <begin position="331"/>
        <end position="351"/>
    </location>
</feature>
<feature type="topological domain" description="Cytoplasmic" evidence="3">
    <location>
        <begin position="352"/>
        <end position="358"/>
    </location>
</feature>
<feature type="transmembrane region" description="Helical" evidence="3">
    <location>
        <begin position="359"/>
        <end position="379"/>
    </location>
</feature>
<feature type="topological domain" description="Extracellular" evidence="3">
    <location>
        <begin position="380"/>
        <end position="381"/>
    </location>
</feature>
<feature type="transmembrane region" description="Helical" evidence="3">
    <location>
        <begin position="382"/>
        <end position="402"/>
    </location>
</feature>
<feature type="topological domain" description="Cytoplasmic" evidence="3">
    <location>
        <begin position="403"/>
        <end position="423"/>
    </location>
</feature>
<feature type="transmembrane region" description="Helical" evidence="3">
    <location>
        <begin position="424"/>
        <end position="444"/>
    </location>
</feature>
<feature type="topological domain" description="Extracellular" evidence="3">
    <location>
        <begin position="445"/>
        <end position="452"/>
    </location>
</feature>
<feature type="transmembrane region" description="Helical" evidence="3">
    <location>
        <begin position="453"/>
        <end position="473"/>
    </location>
</feature>
<feature type="topological domain" description="Cytoplasmic" evidence="3">
    <location>
        <begin position="474"/>
        <end position="523"/>
    </location>
</feature>
<feature type="modified residue" description="Phosphoserine" evidence="1">
    <location>
        <position position="234"/>
    </location>
</feature>
<feature type="modified residue" description="Phosphoserine" evidence="7 8">
    <location>
        <position position="237"/>
    </location>
</feature>
<feature type="modified residue" description="Phosphoserine" evidence="7 8">
    <location>
        <position position="240"/>
    </location>
</feature>
<feature type="modified residue" description="Phosphoserine" evidence="8">
    <location>
        <position position="247"/>
    </location>
</feature>
<feature type="sequence variant" id="VAR_053656" description="In dbSNP:rs35397826.">
    <original>I</original>
    <variation>T</variation>
    <location>
        <position position="121"/>
    </location>
</feature>
<feature type="sequence variant" id="VAR_053657" description="In dbSNP:rs7222013." evidence="4">
    <original>F</original>
    <variation>I</variation>
    <location>
        <position position="204"/>
    </location>
</feature>
<feature type="sequence variant" id="VAR_053658" description="In dbSNP:rs3744307.">
    <original>E</original>
    <variation>D</variation>
    <location>
        <position position="217"/>
    </location>
</feature>
<feature type="sequence variant" id="VAR_053659" description="In dbSNP:rs4410141.">
    <original>E</original>
    <variation>V</variation>
    <location>
        <position position="221"/>
    </location>
</feature>
<feature type="sequence conflict" description="In Ref. 1; AAC52014." evidence="5" ref="1">
    <original>H</original>
    <variation>R</variation>
    <location>
        <position position="481"/>
    </location>
</feature>
<organism>
    <name type="scientific">Homo sapiens</name>
    <name type="common">Human</name>
    <dbReference type="NCBI Taxonomy" id="9606"/>
    <lineage>
        <taxon>Eukaryota</taxon>
        <taxon>Metazoa</taxon>
        <taxon>Chordata</taxon>
        <taxon>Craniata</taxon>
        <taxon>Vertebrata</taxon>
        <taxon>Euteleostomi</taxon>
        <taxon>Mammalia</taxon>
        <taxon>Eutheria</taxon>
        <taxon>Euarchontoglires</taxon>
        <taxon>Primates</taxon>
        <taxon>Haplorrhini</taxon>
        <taxon>Catarrhini</taxon>
        <taxon>Hominidae</taxon>
        <taxon>Homo</taxon>
    </lineage>
</organism>
<accession>O15403</accession>
<accession>Q6P1X3</accession>
<sequence length="523" mass="57393">MTQNKLKLCSKANVYTEVPDGGWGWAVAVSFFFVEVFTYGIIKTFGVFFNDLMDSFNESNSRISWIISICVFVLTFSAPLATVLSNRFGHRLVVMLGGLLVSTGMVAASFSQEVSHMYVAIGIISGLGYCFSFLPTVTILSQYFGKRRSIVTAVASTGECFAVFAFAPAIMALKERIGWRYSLLFVGLLQLNIVIFGALLRPIFIRGPASPKIVIQENRKEAQYMLENEKTRTSIDSIDSGVELTTSPKNVPTHTNLELEPKADMQQVLVKTSPRPSEKKAPLLDFSILKEKSFICYALFGLFATLGFFAPSLYIIPLGISLGIDQDRAAFLLSTMAIAEVFGRIGAGFVLNREPIRKIYIELICVILLTVSLFAFTFATEFWGLMSCSIFFGFMVGTIGGTHIPLLAEDDVVGIEKMSSAAGVYIFIQSIAGLAGPPLAGLLVDQSKIYSRAFYSCAAGMALAAVCLALVRPCKMGLCQHHHSGETKVVSHRGKTLQDIPEDFLEMDLAKNEHRVHVQMEPV</sequence>
<evidence type="ECO:0000250" key="1">
    <source>
        <dbReference type="UniProtKB" id="B1AT66"/>
    </source>
</evidence>
<evidence type="ECO:0000250" key="2">
    <source>
        <dbReference type="UniProtKB" id="Q7TMR7"/>
    </source>
</evidence>
<evidence type="ECO:0000255" key="3"/>
<evidence type="ECO:0000269" key="4">
    <source>
    </source>
</evidence>
<evidence type="ECO:0000305" key="5"/>
<evidence type="ECO:0000312" key="6">
    <source>
        <dbReference type="HGNC" id="HGNC:10927"/>
    </source>
</evidence>
<evidence type="ECO:0007744" key="7">
    <source>
    </source>
</evidence>
<evidence type="ECO:0007744" key="8">
    <source>
    </source>
</evidence>